<dbReference type="EMBL" id="CP000302">
    <property type="protein sequence ID" value="ABE53476.1"/>
    <property type="molecule type" value="Genomic_DNA"/>
</dbReference>
<dbReference type="RefSeq" id="WP_011494643.1">
    <property type="nucleotide sequence ID" value="NC_007954.1"/>
</dbReference>
<dbReference type="SMR" id="Q12SV0"/>
<dbReference type="STRING" id="318161.Sden_0179"/>
<dbReference type="KEGG" id="sdn:Sden_0179"/>
<dbReference type="eggNOG" id="COG0186">
    <property type="taxonomic scope" value="Bacteria"/>
</dbReference>
<dbReference type="HOGENOM" id="CLU_073626_1_1_6"/>
<dbReference type="OrthoDB" id="9811714at2"/>
<dbReference type="Proteomes" id="UP000001982">
    <property type="component" value="Chromosome"/>
</dbReference>
<dbReference type="GO" id="GO:0022627">
    <property type="term" value="C:cytosolic small ribosomal subunit"/>
    <property type="evidence" value="ECO:0007669"/>
    <property type="project" value="TreeGrafter"/>
</dbReference>
<dbReference type="GO" id="GO:0019843">
    <property type="term" value="F:rRNA binding"/>
    <property type="evidence" value="ECO:0007669"/>
    <property type="project" value="UniProtKB-UniRule"/>
</dbReference>
<dbReference type="GO" id="GO:0003735">
    <property type="term" value="F:structural constituent of ribosome"/>
    <property type="evidence" value="ECO:0007669"/>
    <property type="project" value="InterPro"/>
</dbReference>
<dbReference type="GO" id="GO:0006412">
    <property type="term" value="P:translation"/>
    <property type="evidence" value="ECO:0007669"/>
    <property type="project" value="UniProtKB-UniRule"/>
</dbReference>
<dbReference type="CDD" id="cd00364">
    <property type="entry name" value="Ribosomal_uS17"/>
    <property type="match status" value="1"/>
</dbReference>
<dbReference type="FunFam" id="2.40.50.140:FF:000014">
    <property type="entry name" value="30S ribosomal protein S17"/>
    <property type="match status" value="1"/>
</dbReference>
<dbReference type="Gene3D" id="2.40.50.140">
    <property type="entry name" value="Nucleic acid-binding proteins"/>
    <property type="match status" value="1"/>
</dbReference>
<dbReference type="HAMAP" id="MF_01345_B">
    <property type="entry name" value="Ribosomal_uS17_B"/>
    <property type="match status" value="1"/>
</dbReference>
<dbReference type="InterPro" id="IPR012340">
    <property type="entry name" value="NA-bd_OB-fold"/>
</dbReference>
<dbReference type="InterPro" id="IPR000266">
    <property type="entry name" value="Ribosomal_uS17"/>
</dbReference>
<dbReference type="InterPro" id="IPR019984">
    <property type="entry name" value="Ribosomal_uS17_bact/chlr"/>
</dbReference>
<dbReference type="InterPro" id="IPR019979">
    <property type="entry name" value="Ribosomal_uS17_CS"/>
</dbReference>
<dbReference type="NCBIfam" id="NF004123">
    <property type="entry name" value="PRK05610.1"/>
    <property type="match status" value="1"/>
</dbReference>
<dbReference type="NCBIfam" id="TIGR03635">
    <property type="entry name" value="uS17_bact"/>
    <property type="match status" value="1"/>
</dbReference>
<dbReference type="PANTHER" id="PTHR10744">
    <property type="entry name" value="40S RIBOSOMAL PROTEIN S11 FAMILY MEMBER"/>
    <property type="match status" value="1"/>
</dbReference>
<dbReference type="PANTHER" id="PTHR10744:SF1">
    <property type="entry name" value="SMALL RIBOSOMAL SUBUNIT PROTEIN US17M"/>
    <property type="match status" value="1"/>
</dbReference>
<dbReference type="Pfam" id="PF00366">
    <property type="entry name" value="Ribosomal_S17"/>
    <property type="match status" value="1"/>
</dbReference>
<dbReference type="PRINTS" id="PR00973">
    <property type="entry name" value="RIBOSOMALS17"/>
</dbReference>
<dbReference type="SUPFAM" id="SSF50249">
    <property type="entry name" value="Nucleic acid-binding proteins"/>
    <property type="match status" value="1"/>
</dbReference>
<dbReference type="PROSITE" id="PS00056">
    <property type="entry name" value="RIBOSOMAL_S17"/>
    <property type="match status" value="1"/>
</dbReference>
<accession>Q12SV0</accession>
<protein>
    <recommendedName>
        <fullName evidence="1">Small ribosomal subunit protein uS17</fullName>
    </recommendedName>
    <alternativeName>
        <fullName evidence="2">30S ribosomal protein S17</fullName>
    </alternativeName>
</protein>
<name>RS17_SHEDO</name>
<gene>
    <name evidence="1" type="primary">rpsQ</name>
    <name type="ordered locus">Sden_0179</name>
</gene>
<comment type="function">
    <text evidence="1">One of the primary rRNA binding proteins, it binds specifically to the 5'-end of 16S ribosomal RNA.</text>
</comment>
<comment type="subunit">
    <text evidence="1">Part of the 30S ribosomal subunit.</text>
</comment>
<comment type="similarity">
    <text evidence="1">Belongs to the universal ribosomal protein uS17 family.</text>
</comment>
<proteinExistence type="inferred from homology"/>
<feature type="chain" id="PRO_1000055018" description="Small ribosomal subunit protein uS17">
    <location>
        <begin position="1"/>
        <end position="82"/>
    </location>
</feature>
<reference key="1">
    <citation type="submission" date="2006-03" db="EMBL/GenBank/DDBJ databases">
        <title>Complete sequence of Shewanella denitrificans OS217.</title>
        <authorList>
            <consortium name="US DOE Joint Genome Institute"/>
            <person name="Copeland A."/>
            <person name="Lucas S."/>
            <person name="Lapidus A."/>
            <person name="Barry K."/>
            <person name="Detter J.C."/>
            <person name="Glavina del Rio T."/>
            <person name="Hammon N."/>
            <person name="Israni S."/>
            <person name="Dalin E."/>
            <person name="Tice H."/>
            <person name="Pitluck S."/>
            <person name="Brettin T."/>
            <person name="Bruce D."/>
            <person name="Han C."/>
            <person name="Tapia R."/>
            <person name="Gilna P."/>
            <person name="Kiss H."/>
            <person name="Schmutz J."/>
            <person name="Larimer F."/>
            <person name="Land M."/>
            <person name="Hauser L."/>
            <person name="Kyrpides N."/>
            <person name="Lykidis A."/>
            <person name="Richardson P."/>
        </authorList>
    </citation>
    <scope>NUCLEOTIDE SEQUENCE [LARGE SCALE GENOMIC DNA]</scope>
    <source>
        <strain>OS217 / ATCC BAA-1090 / DSM 15013</strain>
    </source>
</reference>
<sequence>MSDKIRTLQGRVTSNKMDKSITVAIERQVKHPLYGKYIKRTTKIHAHDETNQCNEGDVVTISQCRPLSKTKSWALVEVVTKA</sequence>
<evidence type="ECO:0000255" key="1">
    <source>
        <dbReference type="HAMAP-Rule" id="MF_01345"/>
    </source>
</evidence>
<evidence type="ECO:0000305" key="2"/>
<keyword id="KW-1185">Reference proteome</keyword>
<keyword id="KW-0687">Ribonucleoprotein</keyword>
<keyword id="KW-0689">Ribosomal protein</keyword>
<keyword id="KW-0694">RNA-binding</keyword>
<keyword id="KW-0699">rRNA-binding</keyword>
<organism>
    <name type="scientific">Shewanella denitrificans (strain OS217 / ATCC BAA-1090 / DSM 15013)</name>
    <dbReference type="NCBI Taxonomy" id="318161"/>
    <lineage>
        <taxon>Bacteria</taxon>
        <taxon>Pseudomonadati</taxon>
        <taxon>Pseudomonadota</taxon>
        <taxon>Gammaproteobacteria</taxon>
        <taxon>Alteromonadales</taxon>
        <taxon>Shewanellaceae</taxon>
        <taxon>Shewanella</taxon>
    </lineage>
</organism>